<comment type="function">
    <text evidence="1">Molecular chaperone that interacts specifically with outer membrane proteins, thus maintaining the solubility of early folding intermediates during passage through the periplasm.</text>
</comment>
<comment type="subunit">
    <text evidence="1">Homotrimer.</text>
</comment>
<comment type="subcellular location">
    <subcellularLocation>
        <location evidence="1">Periplasm</location>
    </subcellularLocation>
</comment>
<comment type="similarity">
    <text evidence="3">Belongs to the Skp family.</text>
</comment>
<organism>
    <name type="scientific">Shigella boydii serotype 4 (strain Sb227)</name>
    <dbReference type="NCBI Taxonomy" id="300268"/>
    <lineage>
        <taxon>Bacteria</taxon>
        <taxon>Pseudomonadati</taxon>
        <taxon>Pseudomonadota</taxon>
        <taxon>Gammaproteobacteria</taxon>
        <taxon>Enterobacterales</taxon>
        <taxon>Enterobacteriaceae</taxon>
        <taxon>Shigella</taxon>
    </lineage>
</organism>
<feature type="signal peptide" evidence="1">
    <location>
        <begin position="1"/>
        <end position="20"/>
    </location>
</feature>
<feature type="chain" id="PRO_0000227893" description="Chaperone protein Skp">
    <location>
        <begin position="21"/>
        <end position="161"/>
    </location>
</feature>
<feature type="region of interest" description="Lipopolysaccharide binding" evidence="2">
    <location>
        <begin position="97"/>
        <end position="108"/>
    </location>
</feature>
<evidence type="ECO:0000250" key="1"/>
<evidence type="ECO:0000255" key="2"/>
<evidence type="ECO:0000305" key="3"/>
<sequence length="161" mass="17688">MKKWLLAAGLGLALATSAQAADKIAIVNMGSLFQQVAQKTGVSNTLENEFKGRASELQRMETDLQAKMKKLQSMKAGSDRTKLEKDVMAQRQTFAQKAQAFEQDRARRSNEERGKLVTRIQTAVKSVANSQDIDLVVDANAVAYNSSDVKDITADVLKQVK</sequence>
<name>SKP_SHIBS</name>
<protein>
    <recommendedName>
        <fullName>Chaperone protein Skp</fullName>
    </recommendedName>
</protein>
<accession>Q325W2</accession>
<gene>
    <name type="primary">skp</name>
    <name type="ordered locus">SBO_0166</name>
</gene>
<dbReference type="EMBL" id="CP000036">
    <property type="protein sequence ID" value="ABB64896.1"/>
    <property type="molecule type" value="Genomic_DNA"/>
</dbReference>
<dbReference type="RefSeq" id="WP_000758956.1">
    <property type="nucleotide sequence ID" value="NC_007613.1"/>
</dbReference>
<dbReference type="BMRB" id="Q325W2"/>
<dbReference type="SMR" id="Q325W2"/>
<dbReference type="GeneID" id="93777247"/>
<dbReference type="KEGG" id="sbo:SBO_0166"/>
<dbReference type="HOGENOM" id="CLU_101388_2_0_6"/>
<dbReference type="Proteomes" id="UP000007067">
    <property type="component" value="Chromosome"/>
</dbReference>
<dbReference type="GO" id="GO:0005829">
    <property type="term" value="C:cytosol"/>
    <property type="evidence" value="ECO:0007669"/>
    <property type="project" value="TreeGrafter"/>
</dbReference>
<dbReference type="GO" id="GO:0042597">
    <property type="term" value="C:periplasmic space"/>
    <property type="evidence" value="ECO:0007669"/>
    <property type="project" value="UniProtKB-SubCell"/>
</dbReference>
<dbReference type="GO" id="GO:0051082">
    <property type="term" value="F:unfolded protein binding"/>
    <property type="evidence" value="ECO:0007669"/>
    <property type="project" value="InterPro"/>
</dbReference>
<dbReference type="GO" id="GO:0061077">
    <property type="term" value="P:chaperone-mediated protein folding"/>
    <property type="evidence" value="ECO:0007669"/>
    <property type="project" value="TreeGrafter"/>
</dbReference>
<dbReference type="GO" id="GO:0050821">
    <property type="term" value="P:protein stabilization"/>
    <property type="evidence" value="ECO:0007669"/>
    <property type="project" value="TreeGrafter"/>
</dbReference>
<dbReference type="FunFam" id="3.30.910.20:FF:000001">
    <property type="entry name" value="Molecular chaperone Skp"/>
    <property type="match status" value="1"/>
</dbReference>
<dbReference type="Gene3D" id="3.30.910.20">
    <property type="entry name" value="Skp domain"/>
    <property type="match status" value="1"/>
</dbReference>
<dbReference type="InterPro" id="IPR005632">
    <property type="entry name" value="Chaperone_Skp"/>
</dbReference>
<dbReference type="InterPro" id="IPR024930">
    <property type="entry name" value="Skp_dom_sf"/>
</dbReference>
<dbReference type="NCBIfam" id="NF008047">
    <property type="entry name" value="PRK10780.1"/>
    <property type="match status" value="1"/>
</dbReference>
<dbReference type="PANTHER" id="PTHR35089">
    <property type="entry name" value="CHAPERONE PROTEIN SKP"/>
    <property type="match status" value="1"/>
</dbReference>
<dbReference type="PANTHER" id="PTHR35089:SF1">
    <property type="entry name" value="CHAPERONE PROTEIN SKP"/>
    <property type="match status" value="1"/>
</dbReference>
<dbReference type="Pfam" id="PF03938">
    <property type="entry name" value="OmpH"/>
    <property type="match status" value="1"/>
</dbReference>
<dbReference type="PIRSF" id="PIRSF002094">
    <property type="entry name" value="OMP26_Skp"/>
    <property type="match status" value="1"/>
</dbReference>
<dbReference type="SMART" id="SM00935">
    <property type="entry name" value="OmpH"/>
    <property type="match status" value="1"/>
</dbReference>
<dbReference type="SUPFAM" id="SSF111384">
    <property type="entry name" value="OmpH-like"/>
    <property type="match status" value="1"/>
</dbReference>
<reference key="1">
    <citation type="journal article" date="2005" name="Nucleic Acids Res.">
        <title>Genome dynamics and diversity of Shigella species, the etiologic agents of bacillary dysentery.</title>
        <authorList>
            <person name="Yang F."/>
            <person name="Yang J."/>
            <person name="Zhang X."/>
            <person name="Chen L."/>
            <person name="Jiang Y."/>
            <person name="Yan Y."/>
            <person name="Tang X."/>
            <person name="Wang J."/>
            <person name="Xiong Z."/>
            <person name="Dong J."/>
            <person name="Xue Y."/>
            <person name="Zhu Y."/>
            <person name="Xu X."/>
            <person name="Sun L."/>
            <person name="Chen S."/>
            <person name="Nie H."/>
            <person name="Peng J."/>
            <person name="Xu J."/>
            <person name="Wang Y."/>
            <person name="Yuan Z."/>
            <person name="Wen Y."/>
            <person name="Yao Z."/>
            <person name="Shen Y."/>
            <person name="Qiang B."/>
            <person name="Hou Y."/>
            <person name="Yu J."/>
            <person name="Jin Q."/>
        </authorList>
    </citation>
    <scope>NUCLEOTIDE SEQUENCE [LARGE SCALE GENOMIC DNA]</scope>
    <source>
        <strain>Sb227</strain>
    </source>
</reference>
<proteinExistence type="inferred from homology"/>
<keyword id="KW-0143">Chaperone</keyword>
<keyword id="KW-0574">Periplasm</keyword>
<keyword id="KW-0732">Signal</keyword>